<reference key="1">
    <citation type="journal article" date="2009" name="Genome Res.">
        <title>Comparative genomic analyses of the human fungal pathogens Coccidioides and their relatives.</title>
        <authorList>
            <person name="Sharpton T.J."/>
            <person name="Stajich J.E."/>
            <person name="Rounsley S.D."/>
            <person name="Gardner M.J."/>
            <person name="Wortman J.R."/>
            <person name="Jordar V.S."/>
            <person name="Maiti R."/>
            <person name="Kodira C.D."/>
            <person name="Neafsey D.E."/>
            <person name="Zeng Q."/>
            <person name="Hung C.-Y."/>
            <person name="McMahan C."/>
            <person name="Muszewska A."/>
            <person name="Grynberg M."/>
            <person name="Mandel M.A."/>
            <person name="Kellner E.M."/>
            <person name="Barker B.M."/>
            <person name="Galgiani J.N."/>
            <person name="Orbach M.J."/>
            <person name="Kirkland T.N."/>
            <person name="Cole G.T."/>
            <person name="Henn M.R."/>
            <person name="Birren B.W."/>
            <person name="Taylor J.W."/>
        </authorList>
    </citation>
    <scope>NUCLEOTIDE SEQUENCE [LARGE SCALE GENOMIC DNA]</scope>
    <source>
        <strain>C735</strain>
    </source>
</reference>
<evidence type="ECO:0000255" key="1">
    <source>
        <dbReference type="HAMAP-Rule" id="MF_03115"/>
    </source>
</evidence>
<proteinExistence type="inferred from homology"/>
<sequence>MERMLLLSPPSLAARPERLNTILSSHSRYATDLQMLDRVAAGLVSLPQSTYDIVMLLTDVDGLGTGSTSAMGRGVIQSVVRALRPGGKFKRENGTFPSTECPDNTELMLAGLVFDDTGGLLKPDFGPENIVPLKLGKRKPVHSVSSNGTGTSGPHVNMQLSTGSMLKGQTTTIKGVGFVDFTDDPSLSEADIYSGQTDDELIDEETLLDGEDMGRPIIQPPECRPKAGKRRRACKDCTCGLAERLREEDKAARAKADATLETMKLAPKELAEVDFTVQGKLGSCGNCALGDAFRCDGCPYIGLPPFKPGEEVRLLSNDVQL</sequence>
<protein>
    <recommendedName>
        <fullName evidence="1">Fe-S cluster assembly protein DRE2</fullName>
    </recommendedName>
    <alternativeName>
        <fullName evidence="1">Anamorsin homolog</fullName>
    </alternativeName>
</protein>
<dbReference type="EMBL" id="ACFW01000025">
    <property type="protein sequence ID" value="EER28204.1"/>
    <property type="molecule type" value="Genomic_DNA"/>
</dbReference>
<dbReference type="RefSeq" id="XP_003070349.1">
    <property type="nucleotide sequence ID" value="XM_003070303.1"/>
</dbReference>
<dbReference type="GeneID" id="9695844"/>
<dbReference type="KEGG" id="cpw:9695844"/>
<dbReference type="VEuPathDB" id="FungiDB:CPC735_035400"/>
<dbReference type="HOGENOM" id="CLU_067152_1_0_1"/>
<dbReference type="OrthoDB" id="311633at2759"/>
<dbReference type="Proteomes" id="UP000009084">
    <property type="component" value="Unassembled WGS sequence"/>
</dbReference>
<dbReference type="GO" id="GO:0005758">
    <property type="term" value="C:mitochondrial intermembrane space"/>
    <property type="evidence" value="ECO:0007669"/>
    <property type="project" value="UniProtKB-SubCell"/>
</dbReference>
<dbReference type="GO" id="GO:0051537">
    <property type="term" value="F:2 iron, 2 sulfur cluster binding"/>
    <property type="evidence" value="ECO:0007669"/>
    <property type="project" value="UniProtKB-UniRule"/>
</dbReference>
<dbReference type="GO" id="GO:0051539">
    <property type="term" value="F:4 iron, 4 sulfur cluster binding"/>
    <property type="evidence" value="ECO:0007669"/>
    <property type="project" value="UniProtKB-KW"/>
</dbReference>
<dbReference type="GO" id="GO:0009055">
    <property type="term" value="F:electron transfer activity"/>
    <property type="evidence" value="ECO:0007669"/>
    <property type="project" value="UniProtKB-UniRule"/>
</dbReference>
<dbReference type="GO" id="GO:0046872">
    <property type="term" value="F:metal ion binding"/>
    <property type="evidence" value="ECO:0007669"/>
    <property type="project" value="UniProtKB-KW"/>
</dbReference>
<dbReference type="GO" id="GO:0016226">
    <property type="term" value="P:iron-sulfur cluster assembly"/>
    <property type="evidence" value="ECO:0007669"/>
    <property type="project" value="UniProtKB-UniRule"/>
</dbReference>
<dbReference type="Gene3D" id="3.40.50.11000">
    <property type="entry name" value="Fe-S cluster assembly protein Dre2, N-terminal domain"/>
    <property type="match status" value="1"/>
</dbReference>
<dbReference type="HAMAP" id="MF_03115">
    <property type="entry name" value="Anamorsin"/>
    <property type="match status" value="1"/>
</dbReference>
<dbReference type="InterPro" id="IPR007785">
    <property type="entry name" value="Anamorsin"/>
</dbReference>
<dbReference type="InterPro" id="IPR046408">
    <property type="entry name" value="CIAPIN1"/>
</dbReference>
<dbReference type="InterPro" id="IPR031838">
    <property type="entry name" value="Dre2_N"/>
</dbReference>
<dbReference type="PANTHER" id="PTHR13273">
    <property type="entry name" value="ANAMORSIN"/>
    <property type="match status" value="1"/>
</dbReference>
<dbReference type="PANTHER" id="PTHR13273:SF14">
    <property type="entry name" value="ANAMORSIN"/>
    <property type="match status" value="1"/>
</dbReference>
<dbReference type="Pfam" id="PF05093">
    <property type="entry name" value="CIAPIN1"/>
    <property type="match status" value="1"/>
</dbReference>
<dbReference type="Pfam" id="PF16803">
    <property type="entry name" value="DRE2_N"/>
    <property type="match status" value="1"/>
</dbReference>
<gene>
    <name evidence="1" type="primary">DRE2</name>
    <name type="ORF">CPC735_035400</name>
</gene>
<comment type="function">
    <text evidence="1">Component of the cytosolic iron-sulfur (Fe-S) protein assembly (CIA) machinery required for the maturation of extramitochondrial Fe-S proteins. Part of an electron transfer chain functioning in an early step of cytosolic Fe-S biogenesis, facilitating the de novo assembly of a [4Fe-4S] cluster on the scaffold complex CFD1-NBP35. Electrons are transferred to DRE2 from NADPH via the FAD- and FMN-containing protein TAH18. TAH18-DRE2 are also required for the assembly of the diferric tyrosyl radical cofactor of ribonucleotide reductase (RNR), probably by providing electrons for reduction during radical cofactor maturation in the catalytic small subunit RNR2.</text>
</comment>
<comment type="cofactor">
    <cofactor evidence="1">
        <name>[2Fe-2S] cluster</name>
        <dbReference type="ChEBI" id="CHEBI:190135"/>
    </cofactor>
</comment>
<comment type="cofactor">
    <cofactor evidence="1">
        <name>[4Fe-4S] cluster</name>
        <dbReference type="ChEBI" id="CHEBI:49883"/>
    </cofactor>
</comment>
<comment type="subunit">
    <text evidence="1">Monomer. Interacts with TAH18. Interacts with MIA40.</text>
</comment>
<comment type="subcellular location">
    <subcellularLocation>
        <location evidence="1">Cytoplasm</location>
    </subcellularLocation>
    <subcellularLocation>
        <location evidence="1">Mitochondrion intermembrane space</location>
    </subcellularLocation>
</comment>
<comment type="domain">
    <text evidence="1">The C-terminal domain binds 2 Fe-S clusters but is otherwise mostly in an intrinsically disordered conformation.</text>
</comment>
<comment type="domain">
    <text evidence="1">The N-terminal domain has structural similarity with S-adenosyl-L-methionine-dependent methyltransferases, but does not bind S-adenosyl-L-methionine. It is required for correct assembly of the 2 Fe-S clusters.</text>
</comment>
<comment type="domain">
    <text evidence="1">The twin Cx2C motifs are involved in the recognition by the mitochondrial MIA40-ERV1 disulfide relay system. The formation of 2 disulfide bonds in the Cx2C motifs through dithiol/disulfide exchange reactions effectively traps the protein in the mitochondrial intermembrane space.</text>
</comment>
<comment type="similarity">
    <text evidence="1">Belongs to the anamorsin family.</text>
</comment>
<feature type="chain" id="PRO_0000392385" description="Fe-S cluster assembly protein DRE2">
    <location>
        <begin position="1"/>
        <end position="321"/>
    </location>
</feature>
<feature type="region of interest" description="N-terminal SAM-like domain" evidence="1">
    <location>
        <begin position="1"/>
        <end position="131"/>
    </location>
</feature>
<feature type="region of interest" description="Linker" evidence="1">
    <location>
        <begin position="132"/>
        <end position="213"/>
    </location>
</feature>
<feature type="region of interest" description="Fe-S binding site A" evidence="1">
    <location>
        <begin position="223"/>
        <end position="239"/>
    </location>
</feature>
<feature type="region of interest" description="Fe-S binding site B" evidence="1">
    <location>
        <begin position="284"/>
        <end position="298"/>
    </location>
</feature>
<feature type="short sequence motif" description="Cx2C motif 1" evidence="1">
    <location>
        <begin position="284"/>
        <end position="287"/>
    </location>
</feature>
<feature type="short sequence motif" description="Cx2C motif 2" evidence="1">
    <location>
        <begin position="295"/>
        <end position="298"/>
    </location>
</feature>
<feature type="binding site" evidence="1">
    <location>
        <position position="223"/>
    </location>
    <ligand>
        <name>[2Fe-2S] cluster</name>
        <dbReference type="ChEBI" id="CHEBI:190135"/>
    </ligand>
</feature>
<feature type="binding site" evidence="1">
    <location>
        <position position="234"/>
    </location>
    <ligand>
        <name>[2Fe-2S] cluster</name>
        <dbReference type="ChEBI" id="CHEBI:190135"/>
    </ligand>
</feature>
<feature type="binding site" evidence="1">
    <location>
        <position position="237"/>
    </location>
    <ligand>
        <name>[2Fe-2S] cluster</name>
        <dbReference type="ChEBI" id="CHEBI:190135"/>
    </ligand>
</feature>
<feature type="binding site" evidence="1">
    <location>
        <position position="239"/>
    </location>
    <ligand>
        <name>[2Fe-2S] cluster</name>
        <dbReference type="ChEBI" id="CHEBI:190135"/>
    </ligand>
</feature>
<feature type="binding site" evidence="1">
    <location>
        <position position="284"/>
    </location>
    <ligand>
        <name>[4Fe-4S] cluster</name>
        <dbReference type="ChEBI" id="CHEBI:49883"/>
    </ligand>
</feature>
<feature type="binding site" evidence="1">
    <location>
        <position position="287"/>
    </location>
    <ligand>
        <name>[4Fe-4S] cluster</name>
        <dbReference type="ChEBI" id="CHEBI:49883"/>
    </ligand>
</feature>
<feature type="binding site" evidence="1">
    <location>
        <position position="295"/>
    </location>
    <ligand>
        <name>[4Fe-4S] cluster</name>
        <dbReference type="ChEBI" id="CHEBI:49883"/>
    </ligand>
</feature>
<feature type="binding site" evidence="1">
    <location>
        <position position="298"/>
    </location>
    <ligand>
        <name>[4Fe-4S] cluster</name>
        <dbReference type="ChEBI" id="CHEBI:49883"/>
    </ligand>
</feature>
<organism>
    <name type="scientific">Coccidioides posadasii (strain C735)</name>
    <name type="common">Valley fever fungus</name>
    <dbReference type="NCBI Taxonomy" id="222929"/>
    <lineage>
        <taxon>Eukaryota</taxon>
        <taxon>Fungi</taxon>
        <taxon>Dikarya</taxon>
        <taxon>Ascomycota</taxon>
        <taxon>Pezizomycotina</taxon>
        <taxon>Eurotiomycetes</taxon>
        <taxon>Eurotiomycetidae</taxon>
        <taxon>Onygenales</taxon>
        <taxon>Onygenaceae</taxon>
        <taxon>Coccidioides</taxon>
    </lineage>
</organism>
<name>DRE2_COCP7</name>
<accession>C5P664</accession>
<keyword id="KW-0001">2Fe-2S</keyword>
<keyword id="KW-0004">4Fe-4S</keyword>
<keyword id="KW-0963">Cytoplasm</keyword>
<keyword id="KW-0408">Iron</keyword>
<keyword id="KW-0411">Iron-sulfur</keyword>
<keyword id="KW-0479">Metal-binding</keyword>
<keyword id="KW-0496">Mitochondrion</keyword>